<proteinExistence type="predicted"/>
<gene>
    <name type="primary">yfjE</name>
    <name type="ordered locus">BSU08130</name>
</gene>
<feature type="chain" id="PRO_0000049528" description="Uncharacterized protein YfjE">
    <location>
        <begin position="1"/>
        <end position="152"/>
    </location>
</feature>
<feature type="transmembrane region" description="Helical" evidence="1">
    <location>
        <begin position="12"/>
        <end position="34"/>
    </location>
</feature>
<sequence>MSEALTFESKYALLYLGGGLLAMIYGLITFFMAFPAFTSRGNVIFTIKTGPSGEIFLRKRSVLFSEVKRLYMGRHQYSLKGIFFEDIIIEKTDGKIVRIPTWNIITNPLFFEAVERYILPHLNEEAQNNWISQFTEVQRKAYLKEFENHPKL</sequence>
<name>YFJE_BACSU</name>
<protein>
    <recommendedName>
        <fullName>Uncharacterized protein YfjE</fullName>
    </recommendedName>
</protein>
<comment type="subcellular location">
    <subcellularLocation>
        <location evidence="2">Membrane</location>
        <topology evidence="2">Single-pass membrane protein</topology>
    </subcellularLocation>
</comment>
<comment type="similarity">
    <text evidence="2">To B.subtilis YfjD.</text>
</comment>
<evidence type="ECO:0000255" key="1"/>
<evidence type="ECO:0000305" key="2"/>
<reference key="1">
    <citation type="journal article" date="1997" name="Nature">
        <title>The complete genome sequence of the Gram-positive bacterium Bacillus subtilis.</title>
        <authorList>
            <person name="Kunst F."/>
            <person name="Ogasawara N."/>
            <person name="Moszer I."/>
            <person name="Albertini A.M."/>
            <person name="Alloni G."/>
            <person name="Azevedo V."/>
            <person name="Bertero M.G."/>
            <person name="Bessieres P."/>
            <person name="Bolotin A."/>
            <person name="Borchert S."/>
            <person name="Borriss R."/>
            <person name="Boursier L."/>
            <person name="Brans A."/>
            <person name="Braun M."/>
            <person name="Brignell S.C."/>
            <person name="Bron S."/>
            <person name="Brouillet S."/>
            <person name="Bruschi C.V."/>
            <person name="Caldwell B."/>
            <person name="Capuano V."/>
            <person name="Carter N.M."/>
            <person name="Choi S.-K."/>
            <person name="Codani J.-J."/>
            <person name="Connerton I.F."/>
            <person name="Cummings N.J."/>
            <person name="Daniel R.A."/>
            <person name="Denizot F."/>
            <person name="Devine K.M."/>
            <person name="Duesterhoeft A."/>
            <person name="Ehrlich S.D."/>
            <person name="Emmerson P.T."/>
            <person name="Entian K.-D."/>
            <person name="Errington J."/>
            <person name="Fabret C."/>
            <person name="Ferrari E."/>
            <person name="Foulger D."/>
            <person name="Fritz C."/>
            <person name="Fujita M."/>
            <person name="Fujita Y."/>
            <person name="Fuma S."/>
            <person name="Galizzi A."/>
            <person name="Galleron N."/>
            <person name="Ghim S.-Y."/>
            <person name="Glaser P."/>
            <person name="Goffeau A."/>
            <person name="Golightly E.J."/>
            <person name="Grandi G."/>
            <person name="Guiseppi G."/>
            <person name="Guy B.J."/>
            <person name="Haga K."/>
            <person name="Haiech J."/>
            <person name="Harwood C.R."/>
            <person name="Henaut A."/>
            <person name="Hilbert H."/>
            <person name="Holsappel S."/>
            <person name="Hosono S."/>
            <person name="Hullo M.-F."/>
            <person name="Itaya M."/>
            <person name="Jones L.-M."/>
            <person name="Joris B."/>
            <person name="Karamata D."/>
            <person name="Kasahara Y."/>
            <person name="Klaerr-Blanchard M."/>
            <person name="Klein C."/>
            <person name="Kobayashi Y."/>
            <person name="Koetter P."/>
            <person name="Koningstein G."/>
            <person name="Krogh S."/>
            <person name="Kumano M."/>
            <person name="Kurita K."/>
            <person name="Lapidus A."/>
            <person name="Lardinois S."/>
            <person name="Lauber J."/>
            <person name="Lazarevic V."/>
            <person name="Lee S.-M."/>
            <person name="Levine A."/>
            <person name="Liu H."/>
            <person name="Masuda S."/>
            <person name="Mauel C."/>
            <person name="Medigue C."/>
            <person name="Medina N."/>
            <person name="Mellado R.P."/>
            <person name="Mizuno M."/>
            <person name="Moestl D."/>
            <person name="Nakai S."/>
            <person name="Noback M."/>
            <person name="Noone D."/>
            <person name="O'Reilly M."/>
            <person name="Ogawa K."/>
            <person name="Ogiwara A."/>
            <person name="Oudega B."/>
            <person name="Park S.-H."/>
            <person name="Parro V."/>
            <person name="Pohl T.M."/>
            <person name="Portetelle D."/>
            <person name="Porwollik S."/>
            <person name="Prescott A.M."/>
            <person name="Presecan E."/>
            <person name="Pujic P."/>
            <person name="Purnelle B."/>
            <person name="Rapoport G."/>
            <person name="Rey M."/>
            <person name="Reynolds S."/>
            <person name="Rieger M."/>
            <person name="Rivolta C."/>
            <person name="Rocha E."/>
            <person name="Roche B."/>
            <person name="Rose M."/>
            <person name="Sadaie Y."/>
            <person name="Sato T."/>
            <person name="Scanlan E."/>
            <person name="Schleich S."/>
            <person name="Schroeter R."/>
            <person name="Scoffone F."/>
            <person name="Sekiguchi J."/>
            <person name="Sekowska A."/>
            <person name="Seror S.J."/>
            <person name="Serror P."/>
            <person name="Shin B.-S."/>
            <person name="Soldo B."/>
            <person name="Sorokin A."/>
            <person name="Tacconi E."/>
            <person name="Takagi T."/>
            <person name="Takahashi H."/>
            <person name="Takemaru K."/>
            <person name="Takeuchi M."/>
            <person name="Tamakoshi A."/>
            <person name="Tanaka T."/>
            <person name="Terpstra P."/>
            <person name="Tognoni A."/>
            <person name="Tosato V."/>
            <person name="Uchiyama S."/>
            <person name="Vandenbol M."/>
            <person name="Vannier F."/>
            <person name="Vassarotti A."/>
            <person name="Viari A."/>
            <person name="Wambutt R."/>
            <person name="Wedler E."/>
            <person name="Wedler H."/>
            <person name="Weitzenegger T."/>
            <person name="Winters P."/>
            <person name="Wipat A."/>
            <person name="Yamamoto H."/>
            <person name="Yamane K."/>
            <person name="Yasumoto K."/>
            <person name="Yata K."/>
            <person name="Yoshida K."/>
            <person name="Yoshikawa H.-F."/>
            <person name="Zumstein E."/>
            <person name="Yoshikawa H."/>
            <person name="Danchin A."/>
        </authorList>
    </citation>
    <scope>NUCLEOTIDE SEQUENCE [LARGE SCALE GENOMIC DNA]</scope>
    <source>
        <strain>168</strain>
    </source>
</reference>
<keyword id="KW-0472">Membrane</keyword>
<keyword id="KW-1185">Reference proteome</keyword>
<keyword id="KW-0812">Transmembrane</keyword>
<keyword id="KW-1133">Transmembrane helix</keyword>
<accession>O31554</accession>
<dbReference type="EMBL" id="AL009126">
    <property type="protein sequence ID" value="CAB12642.1"/>
    <property type="molecule type" value="Genomic_DNA"/>
</dbReference>
<dbReference type="PIR" id="A69806">
    <property type="entry name" value="A69806"/>
</dbReference>
<dbReference type="RefSeq" id="NP_388694.1">
    <property type="nucleotide sequence ID" value="NC_000964.3"/>
</dbReference>
<dbReference type="RefSeq" id="WP_010886446.1">
    <property type="nucleotide sequence ID" value="NC_000964.3"/>
</dbReference>
<dbReference type="FunCoup" id="O31554">
    <property type="interactions" value="9"/>
</dbReference>
<dbReference type="STRING" id="224308.BSU08130"/>
<dbReference type="PaxDb" id="224308-BSU08130"/>
<dbReference type="EnsemblBacteria" id="CAB12642">
    <property type="protein sequence ID" value="CAB12642"/>
    <property type="gene ID" value="BSU_08130"/>
</dbReference>
<dbReference type="GeneID" id="939699"/>
<dbReference type="KEGG" id="bsu:BSU08130"/>
<dbReference type="PATRIC" id="fig|224308.43.peg.852"/>
<dbReference type="eggNOG" id="ENOG5032BMJ">
    <property type="taxonomic scope" value="Bacteria"/>
</dbReference>
<dbReference type="InParanoid" id="O31554"/>
<dbReference type="OrthoDB" id="2905500at2"/>
<dbReference type="BioCyc" id="BSUB:BSU08130-MONOMER"/>
<dbReference type="Proteomes" id="UP000001570">
    <property type="component" value="Chromosome"/>
</dbReference>
<dbReference type="GO" id="GO:0016020">
    <property type="term" value="C:membrane"/>
    <property type="evidence" value="ECO:0007669"/>
    <property type="project" value="UniProtKB-SubCell"/>
</dbReference>
<dbReference type="InterPro" id="IPR035324">
    <property type="entry name" value="DUF5381"/>
</dbReference>
<dbReference type="Pfam" id="PF17353">
    <property type="entry name" value="DUF5381"/>
    <property type="match status" value="1"/>
</dbReference>
<organism>
    <name type="scientific">Bacillus subtilis (strain 168)</name>
    <dbReference type="NCBI Taxonomy" id="224308"/>
    <lineage>
        <taxon>Bacteria</taxon>
        <taxon>Bacillati</taxon>
        <taxon>Bacillota</taxon>
        <taxon>Bacilli</taxon>
        <taxon>Bacillales</taxon>
        <taxon>Bacillaceae</taxon>
        <taxon>Bacillus</taxon>
    </lineage>
</organism>